<sequence>MIRERKKSRHPRLPTLPLAAKASLYLFFACFSGLSLWSFHRDQPCTQNWIGLLGWSFSSFLLYFFGAAAFFIPLYFLWLSFLYFRRTPRPLFFYKAAAFLSLPFCSAILLSMLSPVGTLPALLDTRLPKFILGNNPPVSYVGGIPFYLFYEGQSFCLKHLIGSVGTALIFGFVMLFSVLYLCGGIALLKKKTFQDGVKKAFCSFFQTCFKNLKKLINRRNYLPKPSVPFVSKNPFSCTKSQPSPRRVSETIILDGSISPLPQEEIPGSKKESFFLTPHPCKRFLTKFVEPQENKAKEGKTIALSSTPTVVRESKGKERAALPKLKSLAVPENDLPQYHLLSKNREARPESLQAELERKALILKQTLTSFGIDADLGNICSGPTLAAFEVLPHSGVKVQKIKSLENDIALKLQASSIRIIAPIPGKAAVGIEIPTPFPQAVNFRDLLEDYQKTNRKLQIPLLLGKKANGDNLWADLATMPHLIIAGTTGSGKSVCINTIVMSMIMTTLPSEIKLVIIDPKKVELTGYSQLPHMLSPVITESREVYNALVWLVKEMESRYEILRYLGLRNIQAFNSRTRNKTIEASYDREIRETMPFMVGIIDELSDLLLSSSQDIETPIIRLAQMARAVGIHLILATQRPSREVITGLIKANFPSRISFKVSNKVNSQIIIDEPGAENLMGNGDMLVLLPSVFGTIRAQGAYICDEDINKVIQDLCSRFPTQYVIPSFHAFDDSDSDNSGEKDPLFAQAKTLILQTGNASTTFLQRKLKIGYARAASLIDQLEEARIIGPSEGAKPRQILIQNPLEG</sequence>
<accession>Q9Z726</accession>
<gene>
    <name type="primary">ftsK</name>
    <name type="ordered locus">CPn_0880</name>
    <name type="ordered locus">CP_0989</name>
    <name type="ordered locus">CpB0909</name>
</gene>
<name>FTSK_CHLPN</name>
<reference key="1">
    <citation type="journal article" date="1999" name="Nat. Genet.">
        <title>Comparative genomes of Chlamydia pneumoniae and C. trachomatis.</title>
        <authorList>
            <person name="Kalman S."/>
            <person name="Mitchell W.P."/>
            <person name="Marathe R."/>
            <person name="Lammel C.J."/>
            <person name="Fan J."/>
            <person name="Hyman R.W."/>
            <person name="Olinger L."/>
            <person name="Grimwood J."/>
            <person name="Davis R.W."/>
            <person name="Stephens R.S."/>
        </authorList>
    </citation>
    <scope>NUCLEOTIDE SEQUENCE [LARGE SCALE GENOMIC DNA]</scope>
    <source>
        <strain>CWL029</strain>
    </source>
</reference>
<reference key="2">
    <citation type="journal article" date="2000" name="Nucleic Acids Res.">
        <title>Genome sequences of Chlamydia trachomatis MoPn and Chlamydia pneumoniae AR39.</title>
        <authorList>
            <person name="Read T.D."/>
            <person name="Brunham R.C."/>
            <person name="Shen C."/>
            <person name="Gill S.R."/>
            <person name="Heidelberg J.F."/>
            <person name="White O."/>
            <person name="Hickey E.K."/>
            <person name="Peterson J.D."/>
            <person name="Utterback T.R."/>
            <person name="Berry K.J."/>
            <person name="Bass S."/>
            <person name="Linher K.D."/>
            <person name="Weidman J.F."/>
            <person name="Khouri H.M."/>
            <person name="Craven B."/>
            <person name="Bowman C."/>
            <person name="Dodson R.J."/>
            <person name="Gwinn M.L."/>
            <person name="Nelson W.C."/>
            <person name="DeBoy R.T."/>
            <person name="Kolonay J.F."/>
            <person name="McClarty G."/>
            <person name="Salzberg S.L."/>
            <person name="Eisen J.A."/>
            <person name="Fraser C.M."/>
        </authorList>
    </citation>
    <scope>NUCLEOTIDE SEQUENCE [LARGE SCALE GENOMIC DNA]</scope>
    <source>
        <strain>AR39</strain>
    </source>
</reference>
<reference key="3">
    <citation type="journal article" date="2000" name="Nucleic Acids Res.">
        <title>Comparison of whole genome sequences of Chlamydia pneumoniae J138 from Japan and CWL029 from USA.</title>
        <authorList>
            <person name="Shirai M."/>
            <person name="Hirakawa H."/>
            <person name="Kimoto M."/>
            <person name="Tabuchi M."/>
            <person name="Kishi F."/>
            <person name="Ouchi K."/>
            <person name="Shiba T."/>
            <person name="Ishii K."/>
            <person name="Hattori M."/>
            <person name="Kuhara S."/>
            <person name="Nakazawa T."/>
        </authorList>
    </citation>
    <scope>NUCLEOTIDE SEQUENCE [LARGE SCALE GENOMIC DNA]</scope>
    <source>
        <strain>J138</strain>
    </source>
</reference>
<reference key="4">
    <citation type="submission" date="2002-05" db="EMBL/GenBank/DDBJ databases">
        <title>The genome sequence of Chlamydia pneumoniae TW183 and comparison with other Chlamydia strains based on whole genome sequence analysis.</title>
        <authorList>
            <person name="Geng M.M."/>
            <person name="Schuhmacher A."/>
            <person name="Muehldorfer I."/>
            <person name="Bensch K.W."/>
            <person name="Schaefer K.P."/>
            <person name="Schneider S."/>
            <person name="Pohl T."/>
            <person name="Essig A."/>
            <person name="Marre R."/>
            <person name="Melchers K."/>
        </authorList>
    </citation>
    <scope>NUCLEOTIDE SEQUENCE [LARGE SCALE GENOMIC DNA]</scope>
    <source>
        <strain>TW-183</strain>
    </source>
</reference>
<reference key="5">
    <citation type="journal article" date="2001" name="Infect. Immun.">
        <title>Chlamydia pneumoniae expresses genes required for DNA replication but not cytokinesis during persistent infection of HEp-2 cells.</title>
        <authorList>
            <person name="Byrne G.I."/>
            <person name="Ouellette S.P."/>
            <person name="Wang Z."/>
            <person name="Rao J.P."/>
            <person name="Lu L."/>
            <person name="Beatty W.L."/>
            <person name="Hudson A.P."/>
        </authorList>
    </citation>
    <scope>INDUCTION</scope>
</reference>
<keyword id="KW-0067">ATP-binding</keyword>
<keyword id="KW-0131">Cell cycle</keyword>
<keyword id="KW-0132">Cell division</keyword>
<keyword id="KW-0997">Cell inner membrane</keyword>
<keyword id="KW-1003">Cell membrane</keyword>
<keyword id="KW-0159">Chromosome partition</keyword>
<keyword id="KW-0238">DNA-binding</keyword>
<keyword id="KW-0472">Membrane</keyword>
<keyword id="KW-0547">Nucleotide-binding</keyword>
<keyword id="KW-0812">Transmembrane</keyword>
<keyword id="KW-1133">Transmembrane helix</keyword>
<proteinExistence type="evidence at transcript level"/>
<dbReference type="EMBL" id="AE001363">
    <property type="protein sequence ID" value="AAD19018.1"/>
    <property type="molecule type" value="Genomic_DNA"/>
</dbReference>
<dbReference type="EMBL" id="AE002161">
    <property type="protein sequence ID" value="AAF38768.1"/>
    <property type="molecule type" value="Genomic_DNA"/>
</dbReference>
<dbReference type="EMBL" id="BA000008">
    <property type="protein sequence ID" value="BAA99088.1"/>
    <property type="molecule type" value="Genomic_DNA"/>
</dbReference>
<dbReference type="EMBL" id="AE009440">
    <property type="protein sequence ID" value="AAP98838.1"/>
    <property type="molecule type" value="Genomic_DNA"/>
</dbReference>
<dbReference type="PIR" id="F72024">
    <property type="entry name" value="F72024"/>
</dbReference>
<dbReference type="PIR" id="F86600">
    <property type="entry name" value="F86600"/>
</dbReference>
<dbReference type="RefSeq" id="NP_225075.1">
    <property type="nucleotide sequence ID" value="NC_000922.1"/>
</dbReference>
<dbReference type="RefSeq" id="WP_010883515.1">
    <property type="nucleotide sequence ID" value="NZ_LN847257.1"/>
</dbReference>
<dbReference type="SMR" id="Q9Z726"/>
<dbReference type="STRING" id="406984.CPK_ORF00287"/>
<dbReference type="GeneID" id="45050933"/>
<dbReference type="KEGG" id="cpa:CP_0989"/>
<dbReference type="KEGG" id="cpj:ftsK"/>
<dbReference type="KEGG" id="cpn:CPn_0880"/>
<dbReference type="KEGG" id="cpt:CpB0909"/>
<dbReference type="PATRIC" id="fig|115713.3.peg.960"/>
<dbReference type="eggNOG" id="COG1674">
    <property type="taxonomic scope" value="Bacteria"/>
</dbReference>
<dbReference type="HOGENOM" id="CLU_001981_9_7_0"/>
<dbReference type="OrthoDB" id="9807790at2"/>
<dbReference type="Proteomes" id="UP000000583">
    <property type="component" value="Chromosome"/>
</dbReference>
<dbReference type="Proteomes" id="UP000000801">
    <property type="component" value="Chromosome"/>
</dbReference>
<dbReference type="GO" id="GO:0005886">
    <property type="term" value="C:plasma membrane"/>
    <property type="evidence" value="ECO:0007669"/>
    <property type="project" value="UniProtKB-SubCell"/>
</dbReference>
<dbReference type="GO" id="GO:0005524">
    <property type="term" value="F:ATP binding"/>
    <property type="evidence" value="ECO:0007669"/>
    <property type="project" value="UniProtKB-KW"/>
</dbReference>
<dbReference type="GO" id="GO:0003677">
    <property type="term" value="F:DNA binding"/>
    <property type="evidence" value="ECO:0007669"/>
    <property type="project" value="UniProtKB-KW"/>
</dbReference>
<dbReference type="GO" id="GO:0051301">
    <property type="term" value="P:cell division"/>
    <property type="evidence" value="ECO:0007669"/>
    <property type="project" value="UniProtKB-KW"/>
</dbReference>
<dbReference type="GO" id="GO:0007059">
    <property type="term" value="P:chromosome segregation"/>
    <property type="evidence" value="ECO:0007669"/>
    <property type="project" value="UniProtKB-KW"/>
</dbReference>
<dbReference type="Gene3D" id="3.30.980.40">
    <property type="match status" value="1"/>
</dbReference>
<dbReference type="Gene3D" id="3.40.50.300">
    <property type="entry name" value="P-loop containing nucleotide triphosphate hydrolases"/>
    <property type="match status" value="1"/>
</dbReference>
<dbReference type="Gene3D" id="1.10.10.10">
    <property type="entry name" value="Winged helix-like DNA-binding domain superfamily/Winged helix DNA-binding domain"/>
    <property type="match status" value="1"/>
</dbReference>
<dbReference type="InterPro" id="IPR050206">
    <property type="entry name" value="FtsK/SpoIIIE/SftA"/>
</dbReference>
<dbReference type="InterPro" id="IPR025199">
    <property type="entry name" value="FtsK_4TM"/>
</dbReference>
<dbReference type="InterPro" id="IPR041027">
    <property type="entry name" value="FtsK_alpha"/>
</dbReference>
<dbReference type="InterPro" id="IPR002543">
    <property type="entry name" value="FtsK_dom"/>
</dbReference>
<dbReference type="InterPro" id="IPR018541">
    <property type="entry name" value="Ftsk_gamma"/>
</dbReference>
<dbReference type="InterPro" id="IPR027417">
    <property type="entry name" value="P-loop_NTPase"/>
</dbReference>
<dbReference type="InterPro" id="IPR036388">
    <property type="entry name" value="WH-like_DNA-bd_sf"/>
</dbReference>
<dbReference type="InterPro" id="IPR036390">
    <property type="entry name" value="WH_DNA-bd_sf"/>
</dbReference>
<dbReference type="PANTHER" id="PTHR22683:SF41">
    <property type="entry name" value="DNA TRANSLOCASE FTSK"/>
    <property type="match status" value="1"/>
</dbReference>
<dbReference type="PANTHER" id="PTHR22683">
    <property type="entry name" value="SPORULATION PROTEIN RELATED"/>
    <property type="match status" value="1"/>
</dbReference>
<dbReference type="Pfam" id="PF13491">
    <property type="entry name" value="FtsK_4TM"/>
    <property type="match status" value="1"/>
</dbReference>
<dbReference type="Pfam" id="PF17854">
    <property type="entry name" value="FtsK_alpha"/>
    <property type="match status" value="1"/>
</dbReference>
<dbReference type="Pfam" id="PF09397">
    <property type="entry name" value="FtsK_gamma"/>
    <property type="match status" value="1"/>
</dbReference>
<dbReference type="Pfam" id="PF01580">
    <property type="entry name" value="FtsK_SpoIIIE"/>
    <property type="match status" value="1"/>
</dbReference>
<dbReference type="SMART" id="SM00843">
    <property type="entry name" value="Ftsk_gamma"/>
    <property type="match status" value="1"/>
</dbReference>
<dbReference type="SUPFAM" id="SSF52540">
    <property type="entry name" value="P-loop containing nucleoside triphosphate hydrolases"/>
    <property type="match status" value="1"/>
</dbReference>
<dbReference type="SUPFAM" id="SSF46785">
    <property type="entry name" value="Winged helix' DNA-binding domain"/>
    <property type="match status" value="1"/>
</dbReference>
<dbReference type="PROSITE" id="PS50901">
    <property type="entry name" value="FTSK"/>
    <property type="match status" value="1"/>
</dbReference>
<evidence type="ECO:0000250" key="1"/>
<evidence type="ECO:0000255" key="2"/>
<evidence type="ECO:0000255" key="3">
    <source>
        <dbReference type="PROSITE-ProRule" id="PRU00289"/>
    </source>
</evidence>
<evidence type="ECO:0000269" key="4">
    <source>
    </source>
</evidence>
<evidence type="ECO:0000305" key="5"/>
<organism>
    <name type="scientific">Chlamydia pneumoniae</name>
    <name type="common">Chlamydophila pneumoniae</name>
    <dbReference type="NCBI Taxonomy" id="83558"/>
    <lineage>
        <taxon>Bacteria</taxon>
        <taxon>Pseudomonadati</taxon>
        <taxon>Chlamydiota</taxon>
        <taxon>Chlamydiia</taxon>
        <taxon>Chlamydiales</taxon>
        <taxon>Chlamydiaceae</taxon>
        <taxon>Chlamydia/Chlamydophila group</taxon>
        <taxon>Chlamydia</taxon>
    </lineage>
</organism>
<comment type="function">
    <text evidence="1">Essential cell division protein that coordinates cell division and chromosome segregation. The N-terminus is involved in assembly of the cell-division machinery. The C-terminus functions as a DNA motor that moves dsDNA in an ATP-dependent manner towards the dif recombination site, which is located within the replication terminus region. Required for activation of the Xer recombinase, allowing activation of chromosome unlinking by recombination (By similarity).</text>
</comment>
<comment type="subunit">
    <text evidence="1">Homohexamer. Forms a ring that surrounds DNA (By similarity).</text>
</comment>
<comment type="subcellular location">
    <subcellularLocation>
        <location evidence="1">Cell inner membrane</location>
        <topology evidence="1">Multi-pass membrane protein</topology>
    </subcellularLocation>
    <text evidence="1">Located at the septum.</text>
</comment>
<comment type="induction">
    <text evidence="4">During infection of human HEp-2 cells, it is strongly down-regulated by IFN-gamma cytokine.</text>
</comment>
<comment type="domain">
    <text evidence="1">Consists of an N-terminal domain, which is sufficient for the localization to the septal ring and is required for cell division, followed by a linker domain, and a C-terminal domain, which forms the translocation motor involved in chromosome segregation. The C-terminal domain can be further subdivided into alpha, beta and gamma subdomains. The alpha and beta subdomains form the DNA pump, and the gamma subdomain is a regulatory subdomain (By similarity).</text>
</comment>
<comment type="similarity">
    <text evidence="5">Belongs to the FtsK/SpoIIIE/SftA family.</text>
</comment>
<feature type="chain" id="PRO_0000098248" description="DNA translocase FtsK">
    <location>
        <begin position="1"/>
        <end position="806"/>
    </location>
</feature>
<feature type="transmembrane region" description="Helical" evidence="2">
    <location>
        <begin position="16"/>
        <end position="36"/>
    </location>
</feature>
<feature type="transmembrane region" description="Helical" evidence="2">
    <location>
        <begin position="64"/>
        <end position="84"/>
    </location>
</feature>
<feature type="transmembrane region" description="Helical" evidence="2">
    <location>
        <begin position="96"/>
        <end position="116"/>
    </location>
</feature>
<feature type="transmembrane region" description="Helical" evidence="2">
    <location>
        <begin position="130"/>
        <end position="150"/>
    </location>
</feature>
<feature type="transmembrane region" description="Helical" evidence="2">
    <location>
        <begin position="168"/>
        <end position="188"/>
    </location>
</feature>
<feature type="topological domain" description="Cytoplasmic" evidence="2">
    <location>
        <begin position="189"/>
        <end position="806"/>
    </location>
</feature>
<feature type="domain" description="FtsK" evidence="3">
    <location>
        <begin position="468"/>
        <end position="667"/>
    </location>
</feature>
<feature type="binding site" evidence="3">
    <location>
        <begin position="488"/>
        <end position="493"/>
    </location>
    <ligand>
        <name>ATP</name>
        <dbReference type="ChEBI" id="CHEBI:30616"/>
    </ligand>
</feature>
<protein>
    <recommendedName>
        <fullName>DNA translocase FtsK</fullName>
    </recommendedName>
</protein>